<sequence length="618" mass="65738">MPAYRSRTTTHGRNMAGARGLWRATGMKDSDFGKPIIAVVNSFTQFVPGHVHLKDLGQLVAREIEAAGGVAKEFNTIAVDDGIAMGHDGMLYSLPSRELIADSVEYMVNAHCADAMVCISNCDKITPGMLMAAMRLNIPAVFVSGGPMEAGKVVLKGKTHAVDLIDAMVAAADSAMSDEDVQTMERSACPTCGSCSGMFTANSMNCLTEALGLSLPGNGSVLATHSDRKRLFVEAGHTIVDLARRYYEGDDASVLPRNIANFKAFENAMTLDIAMGGSTNTVLHLLAAAREAELDFSMKDIDRLSRRVPCLSKIAPSVSDVHMEDVHRAGGIMAILGELDRAGLLDTSCTTVHSETLGAALARWDIRQSNSESVRTFFRAAPGGVPSQTAFSQDRRYDELDLDREKGVIRDAAHAFSKDGGLAVLYGNIALDGCIVKTAGVDASILTFSGPVKVFESQDDAVSAILTNKIVAGDVVVIRYEGPRGGPGMQEMLYPTSYLKSKGLGKACALITDGRFSGGTSGLSIGHVSPEAAEGGLIGLVRDGDRISIDIPNRTISLDVSEAELAKRGEEERARGEAAWTPKDRKRNVSAALQAYAMLTTSAANGAVRDVKRRFGKN</sequence>
<protein>
    <recommendedName>
        <fullName evidence="1">Dihydroxy-acid dehydratase</fullName>
        <shortName evidence="1">DAD</shortName>
        <ecNumber evidence="1">4.2.1.9</ecNumber>
    </recommendedName>
</protein>
<gene>
    <name evidence="1" type="primary">ilvD</name>
    <name type="ordered locus">Rpal_1648</name>
</gene>
<feature type="chain" id="PRO_1000089404" description="Dihydroxy-acid dehydratase">
    <location>
        <begin position="1"/>
        <end position="618"/>
    </location>
</feature>
<feature type="active site" description="Proton acceptor" evidence="1">
    <location>
        <position position="517"/>
    </location>
</feature>
<feature type="binding site" evidence="1">
    <location>
        <position position="81"/>
    </location>
    <ligand>
        <name>Mg(2+)</name>
        <dbReference type="ChEBI" id="CHEBI:18420"/>
    </ligand>
</feature>
<feature type="binding site" evidence="1">
    <location>
        <position position="122"/>
    </location>
    <ligand>
        <name>[2Fe-2S] cluster</name>
        <dbReference type="ChEBI" id="CHEBI:190135"/>
    </ligand>
</feature>
<feature type="binding site" evidence="1">
    <location>
        <position position="123"/>
    </location>
    <ligand>
        <name>Mg(2+)</name>
        <dbReference type="ChEBI" id="CHEBI:18420"/>
    </ligand>
</feature>
<feature type="binding site" description="via carbamate group" evidence="1">
    <location>
        <position position="124"/>
    </location>
    <ligand>
        <name>Mg(2+)</name>
        <dbReference type="ChEBI" id="CHEBI:18420"/>
    </ligand>
</feature>
<feature type="binding site" evidence="1">
    <location>
        <position position="195"/>
    </location>
    <ligand>
        <name>[2Fe-2S] cluster</name>
        <dbReference type="ChEBI" id="CHEBI:190135"/>
    </ligand>
</feature>
<feature type="binding site" evidence="1">
    <location>
        <position position="491"/>
    </location>
    <ligand>
        <name>Mg(2+)</name>
        <dbReference type="ChEBI" id="CHEBI:18420"/>
    </ligand>
</feature>
<feature type="modified residue" description="N6-carboxylysine" evidence="1">
    <location>
        <position position="124"/>
    </location>
</feature>
<name>ILVD_RHOPT</name>
<dbReference type="EC" id="4.2.1.9" evidence="1"/>
<dbReference type="EMBL" id="CP001096">
    <property type="protein sequence ID" value="ACF00177.1"/>
    <property type="molecule type" value="Genomic_DNA"/>
</dbReference>
<dbReference type="RefSeq" id="WP_012495097.1">
    <property type="nucleotide sequence ID" value="NC_011004.1"/>
</dbReference>
<dbReference type="SMR" id="B3Q6A0"/>
<dbReference type="KEGG" id="rpt:Rpal_1648"/>
<dbReference type="HOGENOM" id="CLU_014271_4_3_5"/>
<dbReference type="OrthoDB" id="7793094at2"/>
<dbReference type="UniPathway" id="UPA00047">
    <property type="reaction ID" value="UER00057"/>
</dbReference>
<dbReference type="UniPathway" id="UPA00049">
    <property type="reaction ID" value="UER00061"/>
</dbReference>
<dbReference type="Proteomes" id="UP000001725">
    <property type="component" value="Chromosome"/>
</dbReference>
<dbReference type="GO" id="GO:0005829">
    <property type="term" value="C:cytosol"/>
    <property type="evidence" value="ECO:0007669"/>
    <property type="project" value="TreeGrafter"/>
</dbReference>
<dbReference type="GO" id="GO:0051537">
    <property type="term" value="F:2 iron, 2 sulfur cluster binding"/>
    <property type="evidence" value="ECO:0007669"/>
    <property type="project" value="UniProtKB-UniRule"/>
</dbReference>
<dbReference type="GO" id="GO:0004160">
    <property type="term" value="F:dihydroxy-acid dehydratase activity"/>
    <property type="evidence" value="ECO:0007669"/>
    <property type="project" value="UniProtKB-UniRule"/>
</dbReference>
<dbReference type="GO" id="GO:0000287">
    <property type="term" value="F:magnesium ion binding"/>
    <property type="evidence" value="ECO:0007669"/>
    <property type="project" value="UniProtKB-UniRule"/>
</dbReference>
<dbReference type="GO" id="GO:0009097">
    <property type="term" value="P:isoleucine biosynthetic process"/>
    <property type="evidence" value="ECO:0007669"/>
    <property type="project" value="UniProtKB-UniRule"/>
</dbReference>
<dbReference type="GO" id="GO:0009099">
    <property type="term" value="P:L-valine biosynthetic process"/>
    <property type="evidence" value="ECO:0007669"/>
    <property type="project" value="UniProtKB-UniRule"/>
</dbReference>
<dbReference type="FunFam" id="3.50.30.80:FF:000001">
    <property type="entry name" value="Dihydroxy-acid dehydratase"/>
    <property type="match status" value="1"/>
</dbReference>
<dbReference type="Gene3D" id="3.50.30.80">
    <property type="entry name" value="IlvD/EDD C-terminal domain-like"/>
    <property type="match status" value="1"/>
</dbReference>
<dbReference type="HAMAP" id="MF_00012">
    <property type="entry name" value="IlvD"/>
    <property type="match status" value="1"/>
</dbReference>
<dbReference type="InterPro" id="IPR042096">
    <property type="entry name" value="Dihydro-acid_dehy_C"/>
</dbReference>
<dbReference type="InterPro" id="IPR004404">
    <property type="entry name" value="DihydroxyA_deHydtase"/>
</dbReference>
<dbReference type="InterPro" id="IPR020558">
    <property type="entry name" value="DiOHA_6PGluconate_deHydtase_CS"/>
</dbReference>
<dbReference type="InterPro" id="IPR056740">
    <property type="entry name" value="ILV_EDD_C"/>
</dbReference>
<dbReference type="InterPro" id="IPR000581">
    <property type="entry name" value="ILV_EDD_N"/>
</dbReference>
<dbReference type="InterPro" id="IPR037237">
    <property type="entry name" value="IlvD/EDD_N"/>
</dbReference>
<dbReference type="NCBIfam" id="TIGR00110">
    <property type="entry name" value="ilvD"/>
    <property type="match status" value="1"/>
</dbReference>
<dbReference type="NCBIfam" id="NF009103">
    <property type="entry name" value="PRK12448.1"/>
    <property type="match status" value="1"/>
</dbReference>
<dbReference type="PANTHER" id="PTHR43661">
    <property type="entry name" value="D-XYLONATE DEHYDRATASE"/>
    <property type="match status" value="1"/>
</dbReference>
<dbReference type="PANTHER" id="PTHR43661:SF3">
    <property type="entry name" value="D-XYLONATE DEHYDRATASE YAGF-RELATED"/>
    <property type="match status" value="1"/>
</dbReference>
<dbReference type="Pfam" id="PF24877">
    <property type="entry name" value="ILV_EDD_C"/>
    <property type="match status" value="1"/>
</dbReference>
<dbReference type="Pfam" id="PF00920">
    <property type="entry name" value="ILVD_EDD_N"/>
    <property type="match status" value="1"/>
</dbReference>
<dbReference type="SUPFAM" id="SSF143975">
    <property type="entry name" value="IlvD/EDD N-terminal domain-like"/>
    <property type="match status" value="1"/>
</dbReference>
<dbReference type="SUPFAM" id="SSF52016">
    <property type="entry name" value="LeuD/IlvD-like"/>
    <property type="match status" value="1"/>
</dbReference>
<dbReference type="PROSITE" id="PS00886">
    <property type="entry name" value="ILVD_EDD_1"/>
    <property type="match status" value="1"/>
</dbReference>
<dbReference type="PROSITE" id="PS00887">
    <property type="entry name" value="ILVD_EDD_2"/>
    <property type="match status" value="1"/>
</dbReference>
<evidence type="ECO:0000255" key="1">
    <source>
        <dbReference type="HAMAP-Rule" id="MF_00012"/>
    </source>
</evidence>
<comment type="function">
    <text evidence="1">Functions in the biosynthesis of branched-chain amino acids. Catalyzes the dehydration of (2R,3R)-2,3-dihydroxy-3-methylpentanoate (2,3-dihydroxy-3-methylvalerate) into 2-oxo-3-methylpentanoate (2-oxo-3-methylvalerate) and of (2R)-2,3-dihydroxy-3-methylbutanoate (2,3-dihydroxyisovalerate) into 2-oxo-3-methylbutanoate (2-oxoisovalerate), the penultimate precursor to L-isoleucine and L-valine, respectively.</text>
</comment>
<comment type="catalytic activity">
    <reaction evidence="1">
        <text>(2R)-2,3-dihydroxy-3-methylbutanoate = 3-methyl-2-oxobutanoate + H2O</text>
        <dbReference type="Rhea" id="RHEA:24809"/>
        <dbReference type="ChEBI" id="CHEBI:11851"/>
        <dbReference type="ChEBI" id="CHEBI:15377"/>
        <dbReference type="ChEBI" id="CHEBI:49072"/>
        <dbReference type="EC" id="4.2.1.9"/>
    </reaction>
    <physiologicalReaction direction="left-to-right" evidence="1">
        <dbReference type="Rhea" id="RHEA:24810"/>
    </physiologicalReaction>
</comment>
<comment type="catalytic activity">
    <reaction evidence="1">
        <text>(2R,3R)-2,3-dihydroxy-3-methylpentanoate = (S)-3-methyl-2-oxopentanoate + H2O</text>
        <dbReference type="Rhea" id="RHEA:27694"/>
        <dbReference type="ChEBI" id="CHEBI:15377"/>
        <dbReference type="ChEBI" id="CHEBI:35146"/>
        <dbReference type="ChEBI" id="CHEBI:49258"/>
        <dbReference type="EC" id="4.2.1.9"/>
    </reaction>
    <physiologicalReaction direction="left-to-right" evidence="1">
        <dbReference type="Rhea" id="RHEA:27695"/>
    </physiologicalReaction>
</comment>
<comment type="cofactor">
    <cofactor evidence="1">
        <name>[2Fe-2S] cluster</name>
        <dbReference type="ChEBI" id="CHEBI:190135"/>
    </cofactor>
    <text evidence="1">Binds 1 [2Fe-2S] cluster per subunit. This cluster acts as a Lewis acid cofactor.</text>
</comment>
<comment type="cofactor">
    <cofactor evidence="1">
        <name>Mg(2+)</name>
        <dbReference type="ChEBI" id="CHEBI:18420"/>
    </cofactor>
</comment>
<comment type="pathway">
    <text evidence="1">Amino-acid biosynthesis; L-isoleucine biosynthesis; L-isoleucine from 2-oxobutanoate: step 3/4.</text>
</comment>
<comment type="pathway">
    <text evidence="1">Amino-acid biosynthesis; L-valine biosynthesis; L-valine from pyruvate: step 3/4.</text>
</comment>
<comment type="subunit">
    <text evidence="1">Homodimer.</text>
</comment>
<comment type="similarity">
    <text evidence="1">Belongs to the IlvD/Edd family.</text>
</comment>
<reference key="1">
    <citation type="submission" date="2008-05" db="EMBL/GenBank/DDBJ databases">
        <title>Complete sequence of Rhodopseudomonas palustris TIE-1.</title>
        <authorList>
            <consortium name="US DOE Joint Genome Institute"/>
            <person name="Lucas S."/>
            <person name="Copeland A."/>
            <person name="Lapidus A."/>
            <person name="Glavina del Rio T."/>
            <person name="Dalin E."/>
            <person name="Tice H."/>
            <person name="Pitluck S."/>
            <person name="Chain P."/>
            <person name="Malfatti S."/>
            <person name="Shin M."/>
            <person name="Vergez L."/>
            <person name="Lang D."/>
            <person name="Schmutz J."/>
            <person name="Larimer F."/>
            <person name="Land M."/>
            <person name="Hauser L."/>
            <person name="Kyrpides N."/>
            <person name="Mikhailova N."/>
            <person name="Emerson D."/>
            <person name="Newman D.K."/>
            <person name="Roden E."/>
            <person name="Richardson P."/>
        </authorList>
    </citation>
    <scope>NUCLEOTIDE SEQUENCE [LARGE SCALE GENOMIC DNA]</scope>
    <source>
        <strain>TIE-1</strain>
    </source>
</reference>
<keyword id="KW-0001">2Fe-2S</keyword>
<keyword id="KW-0028">Amino-acid biosynthesis</keyword>
<keyword id="KW-0100">Branched-chain amino acid biosynthesis</keyword>
<keyword id="KW-0408">Iron</keyword>
<keyword id="KW-0411">Iron-sulfur</keyword>
<keyword id="KW-0456">Lyase</keyword>
<keyword id="KW-0460">Magnesium</keyword>
<keyword id="KW-0479">Metal-binding</keyword>
<accession>B3Q6A0</accession>
<proteinExistence type="inferred from homology"/>
<organism>
    <name type="scientific">Rhodopseudomonas palustris (strain TIE-1)</name>
    <dbReference type="NCBI Taxonomy" id="395960"/>
    <lineage>
        <taxon>Bacteria</taxon>
        <taxon>Pseudomonadati</taxon>
        <taxon>Pseudomonadota</taxon>
        <taxon>Alphaproteobacteria</taxon>
        <taxon>Hyphomicrobiales</taxon>
        <taxon>Nitrobacteraceae</taxon>
        <taxon>Rhodopseudomonas</taxon>
    </lineage>
</organism>